<feature type="chain" id="PRO_0000085936" description="Dual specificity tyrosine-phosphorylation-regulated kinase 2">
    <location>
        <begin position="1"/>
        <end position="601"/>
    </location>
</feature>
<feature type="domain" description="Protein kinase" evidence="1">
    <location>
        <begin position="222"/>
        <end position="535"/>
    </location>
</feature>
<feature type="region of interest" description="Disordered" evidence="3">
    <location>
        <begin position="1"/>
        <end position="24"/>
    </location>
</feature>
<feature type="short sequence motif" description="Nuclear localization signal" evidence="28">
    <location>
        <begin position="189"/>
        <end position="191"/>
    </location>
</feature>
<feature type="active site" description="Proton acceptor" evidence="1 2">
    <location>
        <position position="348"/>
    </location>
</feature>
<feature type="binding site" evidence="27">
    <location>
        <begin position="228"/>
        <end position="236"/>
    </location>
    <ligand>
        <name>ATP</name>
        <dbReference type="ChEBI" id="CHEBI:30616"/>
    </ligand>
</feature>
<feature type="binding site" evidence="27">
    <location>
        <position position="251"/>
    </location>
    <ligand>
        <name>ATP</name>
        <dbReference type="ChEBI" id="CHEBI:30616"/>
    </ligand>
</feature>
<feature type="binding site" evidence="27">
    <location>
        <begin position="301"/>
        <end position="304"/>
    </location>
    <ligand>
        <name>ATP</name>
        <dbReference type="ChEBI" id="CHEBI:30616"/>
    </ligand>
</feature>
<feature type="modified residue" description="Phosphoserine" evidence="29">
    <location>
        <position position="30"/>
    </location>
</feature>
<feature type="modified residue" description="Phosphothreonine; by ATM" evidence="18">
    <location>
        <position position="106"/>
    </location>
</feature>
<feature type="modified residue" description="Phosphothreonine; by MAP3K10" evidence="14">
    <location>
        <position position="381"/>
    </location>
</feature>
<feature type="modified residue" description="Phosphotyrosine; by autocatalysis" evidence="22">
    <location>
        <position position="382"/>
    </location>
</feature>
<feature type="modified residue" description="Phosphoserine; by ATM" evidence="18">
    <location>
        <position position="442"/>
    </location>
</feature>
<feature type="modified residue" description="Phosphoserine; by MAP3K10" evidence="14">
    <location>
        <position position="449"/>
    </location>
</feature>
<feature type="splice variant" id="VSP_026115" description="In isoform 2." evidence="26">
    <location>
        <begin position="1"/>
        <end position="73"/>
    </location>
</feature>
<feature type="sequence variant" id="VAR_040458" description="In dbSNP:rs35139851." evidence="12">
    <original>S</original>
    <variation>G</variation>
    <location>
        <position position="98"/>
    </location>
</feature>
<feature type="sequence variant" id="VAR_040459" description="In a glioblastoma multiforme sample; somatic mutation; dbSNP:rs1384093596." evidence="12">
    <original>P</original>
    <variation>L</variation>
    <location>
        <position position="198"/>
    </location>
</feature>
<feature type="sequence variant" id="VAR_040460" description="In dbSNP:rs34166200." evidence="12">
    <original>H</original>
    <variation>N</variation>
    <location>
        <position position="245"/>
    </location>
</feature>
<feature type="sequence variant" id="VAR_040461" description="In dbSNP:rs56293072." evidence="12">
    <original>N</original>
    <variation>S</variation>
    <location>
        <position position="295"/>
    </location>
</feature>
<feature type="sequence variant" id="VAR_040462" description="In dbSNP:rs35688869." evidence="12">
    <original>R</original>
    <variation>Q</variation>
    <location>
        <position position="451"/>
    </location>
</feature>
<feature type="sequence variant" id="VAR_040463" description="In dbSNP:rs55774594." evidence="12">
    <original>F</original>
    <variation>Y</variation>
    <location>
        <position position="455"/>
    </location>
</feature>
<feature type="mutagenesis site" description="Impaired ATM-mediated phosphorylation, reduced affinity with MDM2 and altered MDM2-triggered ubiquitination." evidence="18">
    <original>T</original>
    <variation>A</variation>
    <location>
        <position position="106"/>
    </location>
</feature>
<feature type="mutagenesis site" description="Impaired nuclear translocation." evidence="18">
    <original>KKR</original>
    <variation>NNN</variation>
    <location>
        <begin position="189"/>
        <end position="191"/>
    </location>
</feature>
<feature type="mutagenesis site" description="Abolishes protein serine/threonine kinase activity." evidence="23">
    <original>K</original>
    <variation>R</variation>
    <location>
        <position position="251"/>
    </location>
</feature>
<feature type="mutagenesis site" description="Impaired ATM-mediated phosphorylation, reduced affinity with MDM2 and altered MDM2-triggered ubiquitination." evidence="18">
    <original>S</original>
    <variation>A</variation>
    <location>
        <position position="442"/>
    </location>
</feature>
<feature type="sequence conflict" description="In Ref. 1; CAA73885." evidence="27" ref="1">
    <original>A</original>
    <variation>P</variation>
    <location>
        <position position="37"/>
    </location>
</feature>
<feature type="strand" evidence="33">
    <location>
        <begin position="150"/>
        <end position="152"/>
    </location>
</feature>
<feature type="helix" evidence="31">
    <location>
        <begin position="156"/>
        <end position="163"/>
    </location>
</feature>
<feature type="helix" evidence="31">
    <location>
        <begin position="164"/>
        <end position="166"/>
    </location>
</feature>
<feature type="helix" evidence="31">
    <location>
        <begin position="169"/>
        <end position="174"/>
    </location>
</feature>
<feature type="helix" evidence="31">
    <location>
        <begin position="175"/>
        <end position="177"/>
    </location>
</feature>
<feature type="strand" evidence="30">
    <location>
        <begin position="179"/>
        <end position="181"/>
    </location>
</feature>
<feature type="helix" evidence="31">
    <location>
        <begin position="198"/>
        <end position="202"/>
    </location>
</feature>
<feature type="strand" evidence="30">
    <location>
        <begin position="206"/>
        <end position="208"/>
    </location>
</feature>
<feature type="turn" evidence="31">
    <location>
        <begin position="219"/>
        <end position="221"/>
    </location>
</feature>
<feature type="strand" evidence="31">
    <location>
        <begin position="222"/>
        <end position="231"/>
    </location>
</feature>
<feature type="strand" evidence="31">
    <location>
        <begin position="234"/>
        <end position="241"/>
    </location>
</feature>
<feature type="turn" evidence="31">
    <location>
        <begin position="242"/>
        <end position="245"/>
    </location>
</feature>
<feature type="strand" evidence="31">
    <location>
        <begin position="246"/>
        <end position="253"/>
    </location>
</feature>
<feature type="helix" evidence="31">
    <location>
        <begin position="257"/>
        <end position="274"/>
    </location>
</feature>
<feature type="strand" evidence="34">
    <location>
        <begin position="278"/>
        <end position="280"/>
    </location>
</feature>
<feature type="strand" evidence="31">
    <location>
        <begin position="287"/>
        <end position="292"/>
    </location>
</feature>
<feature type="strand" evidence="31">
    <location>
        <begin position="297"/>
        <end position="301"/>
    </location>
</feature>
<feature type="helix" evidence="31">
    <location>
        <begin position="308"/>
        <end position="314"/>
    </location>
</feature>
<feature type="turn" evidence="31">
    <location>
        <begin position="315"/>
        <end position="317"/>
    </location>
</feature>
<feature type="helix" evidence="31">
    <location>
        <begin position="322"/>
        <end position="341"/>
    </location>
</feature>
<feature type="helix" evidence="31">
    <location>
        <begin position="351"/>
        <end position="353"/>
    </location>
</feature>
<feature type="strand" evidence="31">
    <location>
        <begin position="354"/>
        <end position="358"/>
    </location>
</feature>
<feature type="strand" evidence="31">
    <location>
        <begin position="364"/>
        <end position="366"/>
    </location>
</feature>
<feature type="helix" evidence="36">
    <location>
        <begin position="369"/>
        <end position="371"/>
    </location>
</feature>
<feature type="helix" evidence="35">
    <location>
        <begin position="375"/>
        <end position="377"/>
    </location>
</feature>
<feature type="helix" evidence="31">
    <location>
        <begin position="386"/>
        <end position="388"/>
    </location>
</feature>
<feature type="helix" evidence="31">
    <location>
        <begin position="391"/>
        <end position="395"/>
    </location>
</feature>
<feature type="helix" evidence="31">
    <location>
        <begin position="402"/>
        <end position="417"/>
    </location>
</feature>
<feature type="helix" evidence="31">
    <location>
        <begin position="427"/>
        <end position="438"/>
    </location>
</feature>
<feature type="helix" evidence="31">
    <location>
        <begin position="443"/>
        <end position="447"/>
    </location>
</feature>
<feature type="helix" evidence="31">
    <location>
        <begin position="452"/>
        <end position="455"/>
    </location>
</feature>
<feature type="strand" evidence="32">
    <location>
        <begin position="458"/>
        <end position="460"/>
    </location>
</feature>
<feature type="strand" evidence="31">
    <location>
        <begin position="465"/>
        <end position="469"/>
    </location>
</feature>
<feature type="strand" evidence="31">
    <location>
        <begin position="471"/>
        <end position="473"/>
    </location>
</feature>
<feature type="strand" evidence="31">
    <location>
        <begin position="475"/>
        <end position="478"/>
    </location>
</feature>
<feature type="helix" evidence="31">
    <location>
        <begin position="496"/>
        <end position="499"/>
    </location>
</feature>
<feature type="turn" evidence="31">
    <location>
        <begin position="500"/>
        <end position="502"/>
    </location>
</feature>
<feature type="helix" evidence="31">
    <location>
        <begin position="506"/>
        <end position="515"/>
    </location>
</feature>
<feature type="turn" evidence="31">
    <location>
        <begin position="520"/>
        <end position="522"/>
    </location>
</feature>
<feature type="helix" evidence="31">
    <location>
        <begin position="526"/>
        <end position="529"/>
    </location>
</feature>
<feature type="helix" evidence="31">
    <location>
        <begin position="533"/>
        <end position="535"/>
    </location>
</feature>
<proteinExistence type="evidence at protein level"/>
<sequence>MLTRKPSAAAPAAYPTGRGGDSAVRQLQASPGLGAGATRSGVGTGPPSPIALPPLRASNAAAAAHTIGGSKHTMNDHLHVGSHAHGQIQVQQLFEDNSNKRTVLTTQPNGLTTVGKTGLPVVPERQLDSIHRRQGSSTSLKSMEGMGKVKATPMTPEQAMKQYMQKLTAFEHHEIFSYPEIYFLGLNAKKRQGMTGGPNNGGYDDDQGSYVQVPHDHVAYRYEVLKVIGKGSFGQVVKAYDHKVHQHVALKMVRNEKRFHRQAAEEIRILEHLRKQDKDNTMNVIHMLENFTFRNHICMTFELLSMNLYELIKKNKFQGFSLPLVRKFAHSILQCLDALHKNRIIHCDLKPENILLKQQGRSGIKVIDFGSSCYEHQRVYTYIQSRFYRAPEVILGARYGMPIDMWSLGCILAELLTGYPLLPGEDEGDQLACMIELLGMPSQKLLDASKRAKNFVSSKGYPRYCTVTTLSDGSVVLNGGRSRRGKLRGPPESREWGNALKGCDDPLFLDFLKQCLEWDPAVRMTPGQALRHPWLRRRLPKPPTGEKTSVKRITESTGAITSISKLPPPSSSASKLRTNLAQMTDANGNIQQRTVLPKLVS</sequence>
<reference key="1">
    <citation type="journal article" date="1998" name="J. Biol. Chem.">
        <title>Sequence characteristics, subcellular localization, and substrate specificity of DYRK-related kinases, a novel family of dual specificity protein kinases.</title>
        <authorList>
            <person name="Becker W."/>
            <person name="Weber Y."/>
            <person name="Wetzel K."/>
            <person name="Eirmbter K."/>
            <person name="Tejedor F.J."/>
            <person name="Joost H.-G."/>
        </authorList>
    </citation>
    <scope>NUCLEOTIDE SEQUENCE [MRNA] (ISOFORM 1)</scope>
    <scope>FUNCTION</scope>
    <scope>COFACTOR</scope>
    <scope>PHOSPHORYLATION</scope>
    <scope>TISSUE SPECIFICITY</scope>
    <source>
        <tissue>Fetal brain</tissue>
    </source>
</reference>
<reference key="2">
    <citation type="journal article" date="2004" name="Nat. Genet.">
        <title>Complete sequencing and characterization of 21,243 full-length human cDNAs.</title>
        <authorList>
            <person name="Ota T."/>
            <person name="Suzuki Y."/>
            <person name="Nishikawa T."/>
            <person name="Otsuki T."/>
            <person name="Sugiyama T."/>
            <person name="Irie R."/>
            <person name="Wakamatsu A."/>
            <person name="Hayashi K."/>
            <person name="Sato H."/>
            <person name="Nagai K."/>
            <person name="Kimura K."/>
            <person name="Makita H."/>
            <person name="Sekine M."/>
            <person name="Obayashi M."/>
            <person name="Nishi T."/>
            <person name="Shibahara T."/>
            <person name="Tanaka T."/>
            <person name="Ishii S."/>
            <person name="Yamamoto J."/>
            <person name="Saito K."/>
            <person name="Kawai Y."/>
            <person name="Isono Y."/>
            <person name="Nakamura Y."/>
            <person name="Nagahari K."/>
            <person name="Murakami K."/>
            <person name="Yasuda T."/>
            <person name="Iwayanagi T."/>
            <person name="Wagatsuma M."/>
            <person name="Shiratori A."/>
            <person name="Sudo H."/>
            <person name="Hosoiri T."/>
            <person name="Kaku Y."/>
            <person name="Kodaira H."/>
            <person name="Kondo H."/>
            <person name="Sugawara M."/>
            <person name="Takahashi M."/>
            <person name="Kanda K."/>
            <person name="Yokoi T."/>
            <person name="Furuya T."/>
            <person name="Kikkawa E."/>
            <person name="Omura Y."/>
            <person name="Abe K."/>
            <person name="Kamihara K."/>
            <person name="Katsuta N."/>
            <person name="Sato K."/>
            <person name="Tanikawa M."/>
            <person name="Yamazaki M."/>
            <person name="Ninomiya K."/>
            <person name="Ishibashi T."/>
            <person name="Yamashita H."/>
            <person name="Murakawa K."/>
            <person name="Fujimori K."/>
            <person name="Tanai H."/>
            <person name="Kimata M."/>
            <person name="Watanabe M."/>
            <person name="Hiraoka S."/>
            <person name="Chiba Y."/>
            <person name="Ishida S."/>
            <person name="Ono Y."/>
            <person name="Takiguchi S."/>
            <person name="Watanabe S."/>
            <person name="Yosida M."/>
            <person name="Hotuta T."/>
            <person name="Kusano J."/>
            <person name="Kanehori K."/>
            <person name="Takahashi-Fujii A."/>
            <person name="Hara H."/>
            <person name="Tanase T.-O."/>
            <person name="Nomura Y."/>
            <person name="Togiya S."/>
            <person name="Komai F."/>
            <person name="Hara R."/>
            <person name="Takeuchi K."/>
            <person name="Arita M."/>
            <person name="Imose N."/>
            <person name="Musashino K."/>
            <person name="Yuuki H."/>
            <person name="Oshima A."/>
            <person name="Sasaki N."/>
            <person name="Aotsuka S."/>
            <person name="Yoshikawa Y."/>
            <person name="Matsunawa H."/>
            <person name="Ichihara T."/>
            <person name="Shiohata N."/>
            <person name="Sano S."/>
            <person name="Moriya S."/>
            <person name="Momiyama H."/>
            <person name="Satoh N."/>
            <person name="Takami S."/>
            <person name="Terashima Y."/>
            <person name="Suzuki O."/>
            <person name="Nakagawa S."/>
            <person name="Senoh A."/>
            <person name="Mizoguchi H."/>
            <person name="Goto Y."/>
            <person name="Shimizu F."/>
            <person name="Wakebe H."/>
            <person name="Hishigaki H."/>
            <person name="Watanabe T."/>
            <person name="Sugiyama A."/>
            <person name="Takemoto M."/>
            <person name="Kawakami B."/>
            <person name="Yamazaki M."/>
            <person name="Watanabe K."/>
            <person name="Kumagai A."/>
            <person name="Itakura S."/>
            <person name="Fukuzumi Y."/>
            <person name="Fujimori Y."/>
            <person name="Komiyama M."/>
            <person name="Tashiro H."/>
            <person name="Tanigami A."/>
            <person name="Fujiwara T."/>
            <person name="Ono T."/>
            <person name="Yamada K."/>
            <person name="Fujii Y."/>
            <person name="Ozaki K."/>
            <person name="Hirao M."/>
            <person name="Ohmori Y."/>
            <person name="Kawabata A."/>
            <person name="Hikiji T."/>
            <person name="Kobatake N."/>
            <person name="Inagaki H."/>
            <person name="Ikema Y."/>
            <person name="Okamoto S."/>
            <person name="Okitani R."/>
            <person name="Kawakami T."/>
            <person name="Noguchi S."/>
            <person name="Itoh T."/>
            <person name="Shigeta K."/>
            <person name="Senba T."/>
            <person name="Matsumura K."/>
            <person name="Nakajima Y."/>
            <person name="Mizuno T."/>
            <person name="Morinaga M."/>
            <person name="Sasaki M."/>
            <person name="Togashi T."/>
            <person name="Oyama M."/>
            <person name="Hata H."/>
            <person name="Watanabe M."/>
            <person name="Komatsu T."/>
            <person name="Mizushima-Sugano J."/>
            <person name="Satoh T."/>
            <person name="Shirai Y."/>
            <person name="Takahashi Y."/>
            <person name="Nakagawa K."/>
            <person name="Okumura K."/>
            <person name="Nagase T."/>
            <person name="Nomura N."/>
            <person name="Kikuchi H."/>
            <person name="Masuho Y."/>
            <person name="Yamashita R."/>
            <person name="Nakai K."/>
            <person name="Yada T."/>
            <person name="Nakamura Y."/>
            <person name="Ohara O."/>
            <person name="Isogai T."/>
            <person name="Sugano S."/>
        </authorList>
    </citation>
    <scope>NUCLEOTIDE SEQUENCE [LARGE SCALE MRNA] (ISOFORM 1)</scope>
    <source>
        <tissue>Brain</tissue>
    </source>
</reference>
<reference key="3">
    <citation type="submission" date="2005-07" db="EMBL/GenBank/DDBJ databases">
        <authorList>
            <person name="Mural R.J."/>
            <person name="Istrail S."/>
            <person name="Sutton G.G."/>
            <person name="Florea L."/>
            <person name="Halpern A.L."/>
            <person name="Mobarry C.M."/>
            <person name="Lippert R."/>
            <person name="Walenz B."/>
            <person name="Shatkay H."/>
            <person name="Dew I."/>
            <person name="Miller J.R."/>
            <person name="Flanigan M.J."/>
            <person name="Edwards N.J."/>
            <person name="Bolanos R."/>
            <person name="Fasulo D."/>
            <person name="Halldorsson B.V."/>
            <person name="Hannenhalli S."/>
            <person name="Turner R."/>
            <person name="Yooseph S."/>
            <person name="Lu F."/>
            <person name="Nusskern D.R."/>
            <person name="Shue B.C."/>
            <person name="Zheng X.H."/>
            <person name="Zhong F."/>
            <person name="Delcher A.L."/>
            <person name="Huson D.H."/>
            <person name="Kravitz S.A."/>
            <person name="Mouchard L."/>
            <person name="Reinert K."/>
            <person name="Remington K.A."/>
            <person name="Clark A.G."/>
            <person name="Waterman M.S."/>
            <person name="Eichler E.E."/>
            <person name="Adams M.D."/>
            <person name="Hunkapiller M.W."/>
            <person name="Myers E.W."/>
            <person name="Venter J.C."/>
        </authorList>
    </citation>
    <scope>NUCLEOTIDE SEQUENCE [LARGE SCALE GENOMIC DNA]</scope>
</reference>
<reference key="4">
    <citation type="journal article" date="2004" name="Genome Res.">
        <title>The status, quality, and expansion of the NIH full-length cDNA project: the Mammalian Gene Collection (MGC).</title>
        <authorList>
            <consortium name="The MGC Project Team"/>
        </authorList>
    </citation>
    <scope>NUCLEOTIDE SEQUENCE [LARGE SCALE MRNA] (ISOFORMS 1 AND 2)</scope>
    <source>
        <tissue>Muscle</tissue>
        <tissue>Skin</tissue>
    </source>
</reference>
<reference key="5">
    <citation type="submission" date="1996-11" db="EMBL/GenBank/DDBJ databases">
        <authorList>
            <person name="Becker W."/>
            <person name="Joost H.-G."/>
        </authorList>
    </citation>
    <scope>NUCLEOTIDE SEQUENCE [MRNA] OF 320-528 (ISOFORMS 1/2)</scope>
    <source>
        <tissue>Placenta</tissue>
    </source>
</reference>
<reference key="6">
    <citation type="journal article" date="2001" name="Biochem. J.">
        <title>The kinase DYRK phosphorylates protein-synthesis initiation factor eIF2Bepsilon at Ser539 and the microtubule-associated protein tau at Thr212: potential role for DYRK as a glycogen synthase kinase 3-priming kinase.</title>
        <authorList>
            <person name="Woods Y.L."/>
            <person name="Cohen P."/>
            <person name="Becker W."/>
            <person name="Jakes R."/>
            <person name="Goedert M."/>
            <person name="Wang X."/>
            <person name="Proud C.G."/>
        </authorList>
    </citation>
    <scope>FUNCTION</scope>
</reference>
<reference key="7">
    <citation type="journal article" date="2003" name="Cancer Res.">
        <title>Amplification and overexpression of the dual-specificity tyrosine-(Y)-phosphorylation regulated kinase 2 (DYRK2) gene in esophageal and lung adenocarcinomas.</title>
        <authorList>
            <person name="Miller C.T."/>
            <person name="Aggarwal S."/>
            <person name="Lin T.K."/>
            <person name="Dagenais S.L."/>
            <person name="Contreras J.I."/>
            <person name="Orringer M.B."/>
            <person name="Glover T.W."/>
            <person name="Beer D.G."/>
            <person name="Lin L."/>
        </authorList>
    </citation>
    <scope>INDUCTION IN CANCER</scope>
</reference>
<reference key="8">
    <citation type="journal article" date="2003" name="Mol. Cell. Biol.">
        <title>The C terminus of initiation factor 4E-binding protein 1 contains multiple regulatory features that influence its function and phosphorylation.</title>
        <authorList>
            <person name="Wang X."/>
            <person name="Li W."/>
            <person name="Parra J.L."/>
            <person name="Beugnet A."/>
            <person name="Proud C.G."/>
        </authorList>
    </citation>
    <scope>FUNCTION</scope>
</reference>
<reference key="9">
    <citation type="journal article" date="2004" name="J. Biol. Chem.">
        <title>Phosphorylation of Ser640 in muscle glycogen synthase by DYRK family protein kinases.</title>
        <authorList>
            <person name="Skurat A.V."/>
            <person name="Dietrich A.D."/>
        </authorList>
    </citation>
    <scope>FUNCTION</scope>
</reference>
<reference key="10">
    <citation type="journal article" date="2004" name="J. Biol. Chem.">
        <title>Characterization of cyclin L2, a novel cyclin with an arginine/serine-rich domain: phosphorylation by DYRK1A and colocalization with splicing factors.</title>
        <authorList>
            <person name="de Graaf K."/>
            <person name="Hekerman P."/>
            <person name="Spelten O."/>
            <person name="Herrmann A."/>
            <person name="Packman L.C."/>
            <person name="Bussow K."/>
            <person name="Muller-Newen G."/>
            <person name="Becker W."/>
        </authorList>
    </citation>
    <scope>INTERACTION WITH CCNL2</scope>
</reference>
<reference key="11">
    <citation type="journal article" date="2005" name="Biochem. J.">
        <title>Identification of calcium-regulated heat-stable protein of 24 kDa (CRHSP24) as a physiological substrate for PKB and RSK using KESTREL.</title>
        <authorList>
            <person name="Auld G.C."/>
            <person name="Campbell D.G."/>
            <person name="Morrice N."/>
            <person name="Cohen P."/>
        </authorList>
    </citation>
    <scope>FUNCTION</scope>
</reference>
<reference key="12">
    <citation type="journal article" date="2006" name="J. Biol. Chem.">
        <title>Distinct priming kinases contribute to differential regulation of collapsin response mediator proteins by glycogen synthase kinase-3 in vivo.</title>
        <authorList>
            <person name="Cole A.R."/>
            <person name="Causeret F."/>
            <person name="Yadirgi G."/>
            <person name="Hastie C.J."/>
            <person name="McLauchlan H."/>
            <person name="McManus E.J."/>
            <person name="Hernandez F."/>
            <person name="Eickholt B.J."/>
            <person name="Nikolic M."/>
            <person name="Sutherland C."/>
        </authorList>
    </citation>
    <scope>FUNCTION AS CRMP4/DPYSL3 KINASE</scope>
    <scope>ACTIVITY REGULATION BY PURVALANOL</scope>
</reference>
<reference key="13">
    <citation type="journal article" date="2006" name="Nature">
        <title>A genome-wide Drosophila RNAi screen identifies DYRK-family kinases as regulators of NFAT.</title>
        <authorList>
            <person name="Gwack Y."/>
            <person name="Sharma S."/>
            <person name="Nardone J."/>
            <person name="Tanasa B."/>
            <person name="Iuga A."/>
            <person name="Srikanth S."/>
            <person name="Okamura H."/>
            <person name="Bolton D."/>
            <person name="Feske S."/>
            <person name="Hogan P.G."/>
            <person name="Rao A."/>
        </authorList>
    </citation>
    <scope>FUNCTION</scope>
    <scope>INTERACTION WITH NFATC1</scope>
</reference>
<reference key="14">
    <citation type="journal article" date="2007" name="Mol. Cell">
        <title>DYRK2 is targeted to the nucleus and controls p53 via Ser46 phosphorylation in the apoptotic response to DNA damage.</title>
        <authorList>
            <person name="Taira N."/>
            <person name="Nihira K."/>
            <person name="Yamaguchi T."/>
            <person name="Miki Y."/>
            <person name="Yoshida K."/>
        </authorList>
    </citation>
    <scope>FUNCTION</scope>
    <scope>SUBCELLULAR LOCATION</scope>
</reference>
<reference key="15">
    <citation type="journal article" date="2008" name="Biochem. Pharmacol.">
        <title>Role for DYRK family kinases on regulation of apoptosis.</title>
        <authorList>
            <person name="Yoshida K."/>
        </authorList>
    </citation>
    <scope>FUNCTION IN APOPTOSIS AS P53/TP53 KINASE</scope>
    <scope>SUBCELLULAR LOCATION</scope>
    <scope>PHOSPHORYLATION BY ATM</scope>
    <scope>GENE FAMILY</scope>
</reference>
<reference key="16">
    <citation type="journal article" date="2008" name="Cell">
        <title>Application of active and kinase-deficient kinome collection for identification of kinases regulating hedgehog signaling.</title>
        <authorList>
            <person name="Varjosalo M."/>
            <person name="Bjorklund M."/>
            <person name="Cheng F."/>
            <person name="Syvanen H."/>
            <person name="Kivioja T."/>
            <person name="Kilpinen S."/>
            <person name="Sun Z."/>
            <person name="Kallioniemi O."/>
            <person name="Stunnenberg H.G."/>
            <person name="He W.W."/>
            <person name="Ojala P."/>
            <person name="Taipale J."/>
        </authorList>
    </citation>
    <scope>FUNCTION</scope>
    <scope>PHOSPHORYLATION AT THR-381 AND SER-449</scope>
</reference>
<reference key="17">
    <citation type="journal article" date="2008" name="Trends Mol. Med.">
        <title>Nuclear trafficking of pro-apoptotic kinases in response to DNA damage.</title>
        <authorList>
            <person name="Yoshida K."/>
        </authorList>
    </citation>
    <scope>SUBCELLULAR LOCATION</scope>
</reference>
<reference key="18">
    <citation type="journal article" date="2009" name="FEBS J.">
        <title>Harmine specifically inhibits protein kinase DYRK1A and interferes with neurite formation.</title>
        <authorList>
            <person name="Goeckler N."/>
            <person name="Jofre G."/>
            <person name="Papadopoulos C."/>
            <person name="Soppa U."/>
            <person name="Tejedor F.J."/>
            <person name="Becker W."/>
        </authorList>
    </citation>
    <scope>ACTIVITY REGULATION BY HARMINE</scope>
</reference>
<reference key="19">
    <citation type="journal article" date="2009" name="Nat. Cell Biol.">
        <title>Protein kinase DYRK2 is a scaffold that facilitates assembly of an E3 ligase.</title>
        <authorList>
            <person name="Maddika S."/>
            <person name="Chen J."/>
        </authorList>
    </citation>
    <scope>FUNCTION IN E3 LIGASE REGULATION</scope>
    <scope>FUNCTION AS KATNA1 KINASE</scope>
    <scope>INTERACTION WITH EDVP COMPLEX</scope>
</reference>
<reference key="20">
    <citation type="journal article" date="2010" name="Bioorg. Med. Chem. Lett.">
        <title>Structure-activity relationship study of acridine analogs as haspin and DYRK2 kinase inhibitors.</title>
        <authorList>
            <person name="Cuny G.D."/>
            <person name="Robin M."/>
            <person name="Ulyanova N.P."/>
            <person name="Patnaik D."/>
            <person name="Pique V."/>
            <person name="Casano G."/>
            <person name="Liu J.-F."/>
            <person name="Lin X."/>
            <person name="Xian J."/>
            <person name="Glicksman M.A."/>
            <person name="Stein R.L."/>
            <person name="Higgins J.M.G."/>
        </authorList>
    </citation>
    <scope>ACTIVITY REGULATION BY ACRIDINE ANALOGS</scope>
</reference>
<reference key="21">
    <citation type="journal article" date="2010" name="J. Biol. Chem.">
        <title>ATM augments nuclear stabilization of DYRK2 by inhibiting MDM2 in the apoptotic response to DNA damage.</title>
        <authorList>
            <person name="Taira N."/>
            <person name="Yamamoto H."/>
            <person name="Yamaguchi T."/>
            <person name="Miki Y."/>
            <person name="Yoshida K."/>
        </authorList>
    </citation>
    <scope>SUBCELLULAR LOCATION</scope>
    <scope>PHOSPHORYLATION AT THR-106 AND SER-442 BY ATM</scope>
    <scope>UBIQUITINATION BY MDM2</scope>
    <scope>INTERACTION WITH MDM2</scope>
    <scope>MUTAGENESIS OF THR-106; SER-442 AND 189-LYS--ARG-191</scope>
    <scope>NUCLEAR LOCALIZATION SIGNAL</scope>
    <scope>INDUCTION BY DNA DAMAGE</scope>
</reference>
<reference key="22">
    <citation type="journal article" date="2012" name="J. Clin. Invest.">
        <title>DYRK2 priming phosphorylation of c-Jun and c-Myc modulates cell cycle progression in human cancer cells.</title>
        <authorList>
            <person name="Taira N."/>
            <person name="Mimoto R."/>
            <person name="Kurata M."/>
            <person name="Yamaguchi T."/>
            <person name="Kitagawa M."/>
            <person name="Miki Y."/>
            <person name="Yoshida K."/>
        </authorList>
    </citation>
    <scope>FUNCTION</scope>
</reference>
<reference key="23">
    <citation type="journal article" date="2012" name="J. Mol. Cell Biol.">
        <title>Mutual regulation between SIAH2 and DYRK2 controls hypoxic and genotoxic signaling pathways.</title>
        <authorList>
            <person name="Perez M."/>
            <person name="Garcia-Limones C."/>
            <person name="Zapico I."/>
            <person name="Marina A."/>
            <person name="Schmitz M.L."/>
            <person name="Munoz E."/>
            <person name="Calzado M.A."/>
        </authorList>
    </citation>
    <scope>FUNCTION</scope>
    <scope>UBIQUITINATION BY SIAH2</scope>
</reference>
<reference key="24">
    <citation type="journal article" date="2013" name="J. Biol. Chem.">
        <title>Dyrk2-associated EDD-DDB1-VprBP E3 ligase inhibits telomerase by TERT degradation.</title>
        <authorList>
            <person name="Jung H.Y."/>
            <person name="Wang X."/>
            <person name="Jun S."/>
            <person name="Park J.I."/>
        </authorList>
    </citation>
    <scope>FUNCTION</scope>
    <scope>MUTAGENESIS OF LYS-251</scope>
</reference>
<reference key="25">
    <citation type="journal article" date="2013" name="J. Proteome Res.">
        <title>Toward a comprehensive characterization of a human cancer cell phosphoproteome.</title>
        <authorList>
            <person name="Zhou H."/>
            <person name="Di Palma S."/>
            <person name="Preisinger C."/>
            <person name="Peng M."/>
            <person name="Polat A.N."/>
            <person name="Heck A.J."/>
            <person name="Mohammed S."/>
        </authorList>
    </citation>
    <scope>PHOSPHORYLATION [LARGE SCALE ANALYSIS] AT SER-30</scope>
    <scope>IDENTIFICATION BY MASS SPECTROMETRY [LARGE SCALE ANALYSIS]</scope>
    <source>
        <tissue>Cervix carcinoma</tissue>
        <tissue>Erythroleukemia</tissue>
    </source>
</reference>
<reference key="26">
    <citation type="submission" date="2010-01" db="PDB data bank">
        <title>Crystal structure of dual-specificity tyrosine phosphorylation regulated kinase 2 (DYRK2) in complex with an indirubin ligand.</title>
        <authorList>
            <consortium name="Structural genomics consortium (SGC)"/>
        </authorList>
    </citation>
    <scope>X-RAY CRYSTALLOGRAPHY (2.28 ANGSTROMS) OF 146-552 IN COMPLEX WITH INDIRUBIN</scope>
</reference>
<reference key="27">
    <citation type="journal article" date="2012" name="J. Med. Chem.">
        <title>Selectivity, cocrystal structures, and neuroprotective properties of leucettines, a family of protein kinase inhibitors derived from the marine sponge alkaloid leucettamine B.</title>
        <authorList>
            <person name="Tahtouh T."/>
            <person name="Elkins J.M."/>
            <person name="Filippakopoulos P."/>
            <person name="Soundararajan M."/>
            <person name="Burgy G."/>
            <person name="Durieu E."/>
            <person name="Cochet C."/>
            <person name="Schmid R.S."/>
            <person name="Lo D.C."/>
            <person name="Delhommel F."/>
            <person name="Oberholzer A.E."/>
            <person name="Pearl L.H."/>
            <person name="Carreaux F."/>
            <person name="Bazureau J.P."/>
            <person name="Knapp S."/>
            <person name="Meijer L."/>
        </authorList>
    </citation>
    <scope>X-RAY CRYSTALLOGRAPHY (2.55 ANGSTROMS) OF 146-540 IN COMPLEX WITH LEUCETTAMINE DERIVATIVE</scope>
    <scope>PHOSPHORYLATION AT TYR-382</scope>
    <scope>AUTOPHOSPHORYLATION</scope>
    <scope>ACTIVITY REGULATION</scope>
    <scope>CATALYTIC ACTIVITY</scope>
</reference>
<reference key="28">
    <citation type="journal article" date="2013" name="Structure">
        <title>Structures of Down syndrome kinases, DYRKs, reveal mechanisms of kinase activation and substrate recognition.</title>
        <authorList>
            <person name="Soundararajan M."/>
            <person name="Roos A.K."/>
            <person name="Savitsky P."/>
            <person name="Filippakopoulos P."/>
            <person name="Kettenbach A.N."/>
            <person name="Olsen J.V."/>
            <person name="Gerber S.A."/>
            <person name="Eswaran J."/>
            <person name="Knapp S."/>
            <person name="Elkins J.M."/>
        </authorList>
    </citation>
    <scope>X-RAY CRYSTALLOGRAPHY (2.36 ANGSTROMS) OF 146-552</scope>
</reference>
<reference key="29">
    <citation type="journal article" date="2007" name="Nature">
        <title>Patterns of somatic mutation in human cancer genomes.</title>
        <authorList>
            <person name="Greenman C."/>
            <person name="Stephens P."/>
            <person name="Smith R."/>
            <person name="Dalgliesh G.L."/>
            <person name="Hunter C."/>
            <person name="Bignell G."/>
            <person name="Davies H."/>
            <person name="Teague J."/>
            <person name="Butler A."/>
            <person name="Stevens C."/>
            <person name="Edkins S."/>
            <person name="O'Meara S."/>
            <person name="Vastrik I."/>
            <person name="Schmidt E.E."/>
            <person name="Avis T."/>
            <person name="Barthorpe S."/>
            <person name="Bhamra G."/>
            <person name="Buck G."/>
            <person name="Choudhury B."/>
            <person name="Clements J."/>
            <person name="Cole J."/>
            <person name="Dicks E."/>
            <person name="Forbes S."/>
            <person name="Gray K."/>
            <person name="Halliday K."/>
            <person name="Harrison R."/>
            <person name="Hills K."/>
            <person name="Hinton J."/>
            <person name="Jenkinson A."/>
            <person name="Jones D."/>
            <person name="Menzies A."/>
            <person name="Mironenko T."/>
            <person name="Perry J."/>
            <person name="Raine K."/>
            <person name="Richardson D."/>
            <person name="Shepherd R."/>
            <person name="Small A."/>
            <person name="Tofts C."/>
            <person name="Varian J."/>
            <person name="Webb T."/>
            <person name="West S."/>
            <person name="Widaa S."/>
            <person name="Yates A."/>
            <person name="Cahill D.P."/>
            <person name="Louis D.N."/>
            <person name="Goldstraw P."/>
            <person name="Nicholson A.G."/>
            <person name="Brasseur F."/>
            <person name="Looijenga L."/>
            <person name="Weber B.L."/>
            <person name="Chiew Y.-E."/>
            <person name="DeFazio A."/>
            <person name="Greaves M.F."/>
            <person name="Green A.R."/>
            <person name="Campbell P."/>
            <person name="Birney E."/>
            <person name="Easton D.F."/>
            <person name="Chenevix-Trench G."/>
            <person name="Tan M.-H."/>
            <person name="Khoo S.K."/>
            <person name="Teh B.T."/>
            <person name="Yuen S.T."/>
            <person name="Leung S.Y."/>
            <person name="Wooster R."/>
            <person name="Futreal P.A."/>
            <person name="Stratton M.R."/>
        </authorList>
    </citation>
    <scope>VARIANTS [LARGE SCALE ANALYSIS] GLY-98; LEU-198; ASN-245; SER-295; GLN-451 AND TYR-455</scope>
</reference>
<gene>
    <name type="primary">DYRK2</name>
</gene>
<comment type="function">
    <text evidence="4 5 7 9 10 11 13 14 15 16 20 21 23 24">Serine/threonine-protein kinase involved in the regulation of the mitotic cell cycle, cell proliferation, apoptosis, organization of the cytoskeleton and neurite outgrowth. Functions in part via its role in ubiquitin-dependent proteasomal protein degradation. Functions downstream of ATM and phosphorylates p53/TP53 at 'Ser-46', and thereby contributes to the induction of apoptosis in response to DNA damage. Phosphorylates NFATC1, and thereby inhibits its accumulation in the nucleus and its transcription factor activity. Phosphorylates EIF2B5 at 'Ser-544', enabling its subsequent phosphorylation and inhibition by GSK3B. Likewise, phosphorylation of NFATC1, CRMP2/DPYSL2 and CRMP4/DPYSL3 promotes their subsequent phosphorylation by GSK3B. May play a general role in the priming of GSK3 substrates. Inactivates GYS1 by phosphorylation at 'Ser-641', and potentially also a second phosphorylation site, thus regulating glycogen synthesis. Mediates EDVP E3 ligase complex formation and is required for the phosphorylation and subsequent degradation of KATNA1. Phosphorylates TERT at 'Ser-457', promoting TERT ubiquitination by the EDVP complex. Phosphorylates SIAH2, and thereby increases its ubiquitin ligase activity. Promotes the proteasomal degradation of MYC and JUN, and thereby regulates progress through the mitotic cell cycle and cell proliferation. Promotes proteasomal degradation of GLI2 and GLI3, and thereby plays a role in smoothened and sonic hedgehog signaling. Plays a role in cytoskeleton organization and neurite outgrowth via its phosphorylation of DCX and DPYSL2. Phosphorylates CRMP2/DPYSL2, CRMP4/DPYSL3, DCX, EIF2B5, EIF4EBP1, GLI2, GLI3, GYS1, JUN, MDM2, MYC, NFATC1, p53/TP53, TAU/MAPT and KATNA1. Can phosphorylate histone H1, histone H3 and histone H2B (in vitro). Can phosphorylate CARHSP1 (in vitro).</text>
</comment>
<comment type="catalytic activity">
    <reaction evidence="22">
        <text>L-seryl-[protein] + ATP = O-phospho-L-seryl-[protein] + ADP + H(+)</text>
        <dbReference type="Rhea" id="RHEA:17989"/>
        <dbReference type="Rhea" id="RHEA-COMP:9863"/>
        <dbReference type="Rhea" id="RHEA-COMP:11604"/>
        <dbReference type="ChEBI" id="CHEBI:15378"/>
        <dbReference type="ChEBI" id="CHEBI:29999"/>
        <dbReference type="ChEBI" id="CHEBI:30616"/>
        <dbReference type="ChEBI" id="CHEBI:83421"/>
        <dbReference type="ChEBI" id="CHEBI:456216"/>
        <dbReference type="EC" id="2.7.12.1"/>
    </reaction>
</comment>
<comment type="catalytic activity">
    <reaction evidence="22">
        <text>L-threonyl-[protein] + ATP = O-phospho-L-threonyl-[protein] + ADP + H(+)</text>
        <dbReference type="Rhea" id="RHEA:46608"/>
        <dbReference type="Rhea" id="RHEA-COMP:11060"/>
        <dbReference type="Rhea" id="RHEA-COMP:11605"/>
        <dbReference type="ChEBI" id="CHEBI:15378"/>
        <dbReference type="ChEBI" id="CHEBI:30013"/>
        <dbReference type="ChEBI" id="CHEBI:30616"/>
        <dbReference type="ChEBI" id="CHEBI:61977"/>
        <dbReference type="ChEBI" id="CHEBI:456216"/>
        <dbReference type="EC" id="2.7.12.1"/>
    </reaction>
</comment>
<comment type="catalytic activity">
    <reaction evidence="22">
        <text>L-tyrosyl-[protein] + ATP = O-phospho-L-tyrosyl-[protein] + ADP + H(+)</text>
        <dbReference type="Rhea" id="RHEA:10596"/>
        <dbReference type="Rhea" id="RHEA-COMP:10136"/>
        <dbReference type="Rhea" id="RHEA-COMP:20101"/>
        <dbReference type="ChEBI" id="CHEBI:15378"/>
        <dbReference type="ChEBI" id="CHEBI:30616"/>
        <dbReference type="ChEBI" id="CHEBI:46858"/>
        <dbReference type="ChEBI" id="CHEBI:61978"/>
        <dbReference type="ChEBI" id="CHEBI:456216"/>
        <dbReference type="EC" id="2.7.12.1"/>
    </reaction>
</comment>
<comment type="cofactor">
    <cofactor evidence="24">
        <name>Mg(2+)</name>
        <dbReference type="ChEBI" id="CHEBI:18420"/>
    </cofactor>
</comment>
<comment type="cofactor">
    <cofactor evidence="24">
        <name>Mn(2+)</name>
        <dbReference type="ChEBI" id="CHEBI:29035"/>
    </cofactor>
</comment>
<comment type="activity regulation">
    <text evidence="11 17 19 22">Activated by autophosphorylation on the second tyrosine residue in the Tyr-X-Tyr motif in the activation loop. Inhibited by acridine analogs, purvalanol, and barely by harmine. Inhibited by leucettine and leucettine derivatives.</text>
</comment>
<comment type="subunit">
    <text evidence="8 10 16 18 22 25">Component of an E3 ligase complex containing DYRK2, EDD/UBR5, DDB1 and DCAF1 (EDVP complex). Interacts directly with EDD/UBR5, DDB1 and DCAF1. Interacts with SIAH2 and MDM2. Interacts with MAP3K10 and NFATC1. May also interact with CCNL2.</text>
</comment>
<comment type="interaction">
    <interactant intactId="EBI-749432">
        <id>Q92630</id>
    </interactant>
    <interactant intactId="EBI-3914009">
        <id>Q9NR20</id>
        <label>DYRK4</label>
    </interactant>
    <organismsDiffer>false</organismsDiffer>
    <experiments>3</experiments>
</comment>
<comment type="interaction">
    <interactant intactId="EBI-749432">
        <id>Q92630</id>
    </interactant>
    <interactant intactId="EBI-745305">
        <id>Q13422</id>
        <label>IKZF1</label>
    </interactant>
    <organismsDiffer>false</organismsDiffer>
    <experiments>3</experiments>
</comment>
<comment type="interaction">
    <interactant intactId="EBI-749432">
        <id>Q92630</id>
    </interactant>
    <interactant intactId="EBI-739657">
        <id>Q9BQD3</id>
        <label>KXD1</label>
    </interactant>
    <organismsDiffer>false</organismsDiffer>
    <experiments>3</experiments>
</comment>
<comment type="interaction">
    <interactant intactId="EBI-749432">
        <id>Q92630</id>
    </interactant>
    <interactant intactId="EBI-741037">
        <id>Q9BRK4</id>
        <label>LZTS2</label>
    </interactant>
    <organismsDiffer>false</organismsDiffer>
    <experiments>3</experiments>
</comment>
<comment type="interaction">
    <interactant intactId="EBI-749432">
        <id>Q92630</id>
    </interactant>
    <interactant intactId="EBI-751145">
        <id>P23497</id>
        <label>SP100</label>
    </interactant>
    <organismsDiffer>false</organismsDiffer>
    <experiments>3</experiments>
</comment>
<comment type="interaction">
    <interactant intactId="EBI-749432">
        <id>Q92630</id>
    </interactant>
    <interactant intactId="EBI-714790">
        <id>O43379</id>
        <label>WDR62</label>
    </interactant>
    <organismsDiffer>false</organismsDiffer>
    <experiments>3</experiments>
</comment>
<comment type="interaction">
    <interactant intactId="EBI-749432">
        <id>Q92630</id>
    </interactant>
    <interactant intactId="EBI-356498">
        <id>P62258</id>
        <label>YWHAE</label>
    </interactant>
    <organismsDiffer>false</organismsDiffer>
    <experiments>2</experiments>
</comment>
<comment type="interaction">
    <interactant intactId="EBI-749432">
        <id>Q92630</id>
    </interactant>
    <interactant intactId="EBI-395708">
        <id>Q96C00</id>
        <label>ZBTB9</label>
    </interactant>
    <organismsDiffer>false</organismsDiffer>
    <experiments>3</experiments>
</comment>
<comment type="subcellular location">
    <subcellularLocation>
        <location>Cytoplasm</location>
    </subcellularLocation>
    <subcellularLocation>
        <location>Nucleus</location>
    </subcellularLocation>
    <text>Translocates into the nucleus following DNA damage.</text>
</comment>
<comment type="alternative products">
    <event type="alternative splicing"/>
    <isoform>
        <id>Q92630-1</id>
        <name>1</name>
        <sequence type="displayed"/>
    </isoform>
    <isoform>
        <id>Q92630-2</id>
        <name>2</name>
        <sequence type="described" ref="VSP_026115"/>
    </isoform>
</comment>
<comment type="tissue specificity">
    <text evidence="24">Testis, after the onset of spermatogenesis.</text>
</comment>
<comment type="induction">
    <text evidence="6 18">Accumulates in nucleus upon DNA damage. Induced in both esophageal and lung adenocarcinomas.</text>
</comment>
<comment type="PTM">
    <text evidence="18">Autophosphorylates cotranslationally on the second tyrosine residue in the Tyr-X-Tyr motif in the activation loop, but once mature, does not have any protein tyrosine kinase activity. Phosphorylated at Thr-106 and Ser-442 by ATM in response to genotoxic stress.</text>
</comment>
<comment type="PTM">
    <text evidence="18 21">Under normal conditions, polyubiquitinated in the nucleus by MDM2, leading to its proteasomal degradation. Phosphorylation on Thr-106 and Ser-442 by ATM in response to genotoxic stress disrupts MDM2 binding and prevents MDM2-mediated ubiquitination and subsequent proteasomal degradation. Polyubiquitinated by SIAH2, leading to its proteasomal degradation. Polyubiquitinated by SIAH2 occurs under normal conditions, and is enhanced in response to hypoxia.</text>
</comment>
<comment type="similarity">
    <text evidence="27">Belongs to the protein kinase superfamily. CMGC Ser/Thr protein kinase family. MNB/DYRK subfamily.</text>
</comment>
<comment type="sequence caution" evidence="27">
    <conflict type="erroneous initiation">
        <sequence resource="EMBL-CDS" id="CAA73885"/>
    </conflict>
    <text>Truncated N-terminus.</text>
</comment>
<organism>
    <name type="scientific">Homo sapiens</name>
    <name type="common">Human</name>
    <dbReference type="NCBI Taxonomy" id="9606"/>
    <lineage>
        <taxon>Eukaryota</taxon>
        <taxon>Metazoa</taxon>
        <taxon>Chordata</taxon>
        <taxon>Craniata</taxon>
        <taxon>Vertebrata</taxon>
        <taxon>Euteleostomi</taxon>
        <taxon>Mammalia</taxon>
        <taxon>Eutheria</taxon>
        <taxon>Euarchontoglires</taxon>
        <taxon>Primates</taxon>
        <taxon>Haplorrhini</taxon>
        <taxon>Catarrhini</taxon>
        <taxon>Hominidae</taxon>
        <taxon>Homo</taxon>
    </lineage>
</organism>
<protein>
    <recommendedName>
        <fullName>Dual specificity tyrosine-phosphorylation-regulated kinase 2</fullName>
        <ecNumber evidence="22">2.7.12.1</ecNumber>
    </recommendedName>
</protein>
<accession>Q92630</accession>
<accession>B2R9V9</accession>
<accession>Q9BRB5</accession>
<keyword id="KW-0002">3D-structure</keyword>
<keyword id="KW-0025">Alternative splicing</keyword>
<keyword id="KW-0053">Apoptosis</keyword>
<keyword id="KW-0067">ATP-binding</keyword>
<keyword id="KW-0963">Cytoplasm</keyword>
<keyword id="KW-0418">Kinase</keyword>
<keyword id="KW-0460">Magnesium</keyword>
<keyword id="KW-0464">Manganese</keyword>
<keyword id="KW-0547">Nucleotide-binding</keyword>
<keyword id="KW-0539">Nucleus</keyword>
<keyword id="KW-0597">Phosphoprotein</keyword>
<keyword id="KW-1267">Proteomics identification</keyword>
<keyword id="KW-1185">Reference proteome</keyword>
<keyword id="KW-0723">Serine/threonine-protein kinase</keyword>
<keyword id="KW-0808">Transferase</keyword>
<keyword id="KW-0829">Tyrosine-protein kinase</keyword>
<keyword id="KW-0832">Ubl conjugation</keyword>
<keyword id="KW-0833">Ubl conjugation pathway</keyword>
<evidence type="ECO:0000255" key="1">
    <source>
        <dbReference type="PROSITE-ProRule" id="PRU00159"/>
    </source>
</evidence>
<evidence type="ECO:0000255" key="2">
    <source>
        <dbReference type="PROSITE-ProRule" id="PRU10027"/>
    </source>
</evidence>
<evidence type="ECO:0000256" key="3">
    <source>
        <dbReference type="SAM" id="MobiDB-lite"/>
    </source>
</evidence>
<evidence type="ECO:0000269" key="4">
    <source>
    </source>
</evidence>
<evidence type="ECO:0000269" key="5">
    <source>
    </source>
</evidence>
<evidence type="ECO:0000269" key="6">
    <source>
    </source>
</evidence>
<evidence type="ECO:0000269" key="7">
    <source>
    </source>
</evidence>
<evidence type="ECO:0000269" key="8">
    <source>
    </source>
</evidence>
<evidence type="ECO:0000269" key="9">
    <source>
    </source>
</evidence>
<evidence type="ECO:0000269" key="10">
    <source>
    </source>
</evidence>
<evidence type="ECO:0000269" key="11">
    <source>
    </source>
</evidence>
<evidence type="ECO:0000269" key="12">
    <source>
    </source>
</evidence>
<evidence type="ECO:0000269" key="13">
    <source>
    </source>
</evidence>
<evidence type="ECO:0000269" key="14">
    <source>
    </source>
</evidence>
<evidence type="ECO:0000269" key="15">
    <source>
    </source>
</evidence>
<evidence type="ECO:0000269" key="16">
    <source>
    </source>
</evidence>
<evidence type="ECO:0000269" key="17">
    <source>
    </source>
</evidence>
<evidence type="ECO:0000269" key="18">
    <source>
    </source>
</evidence>
<evidence type="ECO:0000269" key="19">
    <source>
    </source>
</evidence>
<evidence type="ECO:0000269" key="20">
    <source>
    </source>
</evidence>
<evidence type="ECO:0000269" key="21">
    <source>
    </source>
</evidence>
<evidence type="ECO:0000269" key="22">
    <source>
    </source>
</evidence>
<evidence type="ECO:0000269" key="23">
    <source>
    </source>
</evidence>
<evidence type="ECO:0000269" key="24">
    <source>
    </source>
</evidence>
<evidence type="ECO:0000269" key="25">
    <source ref="26"/>
</evidence>
<evidence type="ECO:0000303" key="26">
    <source>
    </source>
</evidence>
<evidence type="ECO:0000305" key="27"/>
<evidence type="ECO:0000305" key="28">
    <source>
    </source>
</evidence>
<evidence type="ECO:0007744" key="29">
    <source>
    </source>
</evidence>
<evidence type="ECO:0007829" key="30">
    <source>
        <dbReference type="PDB" id="3K2L"/>
    </source>
</evidence>
<evidence type="ECO:0007829" key="31">
    <source>
        <dbReference type="PDB" id="5LXC"/>
    </source>
</evidence>
<evidence type="ECO:0007829" key="32">
    <source>
        <dbReference type="PDB" id="6HDP"/>
    </source>
</evidence>
<evidence type="ECO:0007829" key="33">
    <source>
        <dbReference type="PDB" id="6HDR"/>
    </source>
</evidence>
<evidence type="ECO:0007829" key="34">
    <source>
        <dbReference type="PDB" id="7AKH"/>
    </source>
</evidence>
<evidence type="ECO:0007829" key="35">
    <source>
        <dbReference type="PDB" id="7DHK"/>
    </source>
</evidence>
<evidence type="ECO:0007829" key="36">
    <source>
        <dbReference type="PDB" id="8HLT"/>
    </source>
</evidence>
<name>DYRK2_HUMAN</name>
<dbReference type="EC" id="2.7.12.1" evidence="22"/>
<dbReference type="EMBL" id="Y13493">
    <property type="protein sequence ID" value="CAA73885.1"/>
    <property type="status" value="ALT_INIT"/>
    <property type="molecule type" value="mRNA"/>
</dbReference>
<dbReference type="EMBL" id="AK313937">
    <property type="protein sequence ID" value="BAG36656.1"/>
    <property type="molecule type" value="mRNA"/>
</dbReference>
<dbReference type="EMBL" id="CH471054">
    <property type="protein sequence ID" value="EAW97176.1"/>
    <property type="molecule type" value="Genomic_DNA"/>
</dbReference>
<dbReference type="EMBL" id="BC005809">
    <property type="protein sequence ID" value="AAH05809.1"/>
    <property type="molecule type" value="mRNA"/>
</dbReference>
<dbReference type="EMBL" id="BC006375">
    <property type="protein sequence ID" value="AAH06375.1"/>
    <property type="molecule type" value="mRNA"/>
</dbReference>
<dbReference type="EMBL" id="Y09216">
    <property type="protein sequence ID" value="CAA70418.1"/>
    <property type="molecule type" value="mRNA"/>
</dbReference>
<dbReference type="CCDS" id="CCDS8978.1">
    <molecule id="Q92630-1"/>
</dbReference>
<dbReference type="CCDS" id="CCDS8979.1">
    <molecule id="Q92630-2"/>
</dbReference>
<dbReference type="RefSeq" id="NP_003574.1">
    <molecule id="Q92630-2"/>
    <property type="nucleotide sequence ID" value="NM_003583.4"/>
</dbReference>
<dbReference type="RefSeq" id="NP_006473.2">
    <molecule id="Q92630-1"/>
    <property type="nucleotide sequence ID" value="NM_006482.3"/>
</dbReference>
<dbReference type="RefSeq" id="XP_016875521.1">
    <molecule id="Q92630-2"/>
    <property type="nucleotide sequence ID" value="XM_017020032.2"/>
</dbReference>
<dbReference type="PDB" id="3K2L">
    <property type="method" value="X-ray"/>
    <property type="resolution" value="2.36 A"/>
    <property type="chains" value="A=146-552"/>
</dbReference>
<dbReference type="PDB" id="3KVW">
    <property type="method" value="X-ray"/>
    <property type="resolution" value="2.28 A"/>
    <property type="chains" value="A=146-552"/>
</dbReference>
<dbReference type="PDB" id="4AZF">
    <property type="method" value="X-ray"/>
    <property type="resolution" value="2.55 A"/>
    <property type="chains" value="A=146-540"/>
</dbReference>
<dbReference type="PDB" id="5LXC">
    <property type="method" value="X-ray"/>
    <property type="resolution" value="2.15 A"/>
    <property type="chains" value="A/B=146-552"/>
</dbReference>
<dbReference type="PDB" id="5LXD">
    <property type="method" value="X-ray"/>
    <property type="resolution" value="2.58 A"/>
    <property type="chains" value="A/B=146-552"/>
</dbReference>
<dbReference type="PDB" id="5ZTN">
    <property type="method" value="X-ray"/>
    <property type="resolution" value="2.50 A"/>
    <property type="chains" value="A/B=146-552"/>
</dbReference>
<dbReference type="PDB" id="6HDP">
    <property type="method" value="X-ray"/>
    <property type="resolution" value="2.30 A"/>
    <property type="chains" value="A=146-552"/>
</dbReference>
<dbReference type="PDB" id="6HDR">
    <property type="method" value="X-ray"/>
    <property type="resolution" value="2.20 A"/>
    <property type="chains" value="A=146-552"/>
</dbReference>
<dbReference type="PDB" id="6K0J">
    <property type="method" value="X-ray"/>
    <property type="resolution" value="2.35 A"/>
    <property type="chains" value="A=212-536"/>
</dbReference>
<dbReference type="PDB" id="7AKF">
    <property type="method" value="X-ray"/>
    <property type="resolution" value="2.60 A"/>
    <property type="chains" value="A=146-552"/>
</dbReference>
<dbReference type="PDB" id="7AKH">
    <property type="method" value="X-ray"/>
    <property type="resolution" value="2.85 A"/>
    <property type="chains" value="A=146-552"/>
</dbReference>
<dbReference type="PDB" id="7DG4">
    <property type="method" value="X-ray"/>
    <property type="resolution" value="2.58 A"/>
    <property type="chains" value="A=215-538"/>
</dbReference>
<dbReference type="PDB" id="7DH3">
    <property type="method" value="X-ray"/>
    <property type="resolution" value="2.33 A"/>
    <property type="chains" value="A=213-538"/>
</dbReference>
<dbReference type="PDB" id="7DH9">
    <property type="method" value="X-ray"/>
    <property type="resolution" value="2.19 A"/>
    <property type="chains" value="A=215-538"/>
</dbReference>
<dbReference type="PDB" id="7DHC">
    <property type="method" value="X-ray"/>
    <property type="resolution" value="2.59 A"/>
    <property type="chains" value="A=215-538"/>
</dbReference>
<dbReference type="PDB" id="7DHH">
    <property type="method" value="X-ray"/>
    <property type="resolution" value="2.49 A"/>
    <property type="chains" value="A=215-538"/>
</dbReference>
<dbReference type="PDB" id="7DHK">
    <property type="method" value="X-ray"/>
    <property type="resolution" value="2.34 A"/>
    <property type="chains" value="A=215-538"/>
</dbReference>
<dbReference type="PDB" id="7DHN">
    <property type="method" value="X-ray"/>
    <property type="resolution" value="2.38 A"/>
    <property type="chains" value="A=215-538"/>
</dbReference>
<dbReference type="PDB" id="7DHO">
    <property type="method" value="X-ray"/>
    <property type="resolution" value="3.29 A"/>
    <property type="chains" value="A=215-538"/>
</dbReference>
<dbReference type="PDB" id="7DHV">
    <property type="method" value="X-ray"/>
    <property type="resolution" value="2.68 A"/>
    <property type="chains" value="A=212-538"/>
</dbReference>
<dbReference type="PDB" id="7DJO">
    <property type="method" value="X-ray"/>
    <property type="resolution" value="2.50 A"/>
    <property type="chains" value="A=215-538"/>
</dbReference>
<dbReference type="PDB" id="7DL6">
    <property type="method" value="X-ray"/>
    <property type="resolution" value="2.65 A"/>
    <property type="chains" value="A=215-538"/>
</dbReference>
<dbReference type="PDB" id="8HLT">
    <property type="method" value="X-ray"/>
    <property type="resolution" value="2.80 A"/>
    <property type="chains" value="A/B=145-537"/>
</dbReference>
<dbReference type="PDBsum" id="3K2L"/>
<dbReference type="PDBsum" id="3KVW"/>
<dbReference type="PDBsum" id="4AZF"/>
<dbReference type="PDBsum" id="5LXC"/>
<dbReference type="PDBsum" id="5LXD"/>
<dbReference type="PDBsum" id="5ZTN"/>
<dbReference type="PDBsum" id="6HDP"/>
<dbReference type="PDBsum" id="6HDR"/>
<dbReference type="PDBsum" id="6K0J"/>
<dbReference type="PDBsum" id="7AKF"/>
<dbReference type="PDBsum" id="7AKH"/>
<dbReference type="PDBsum" id="7DG4"/>
<dbReference type="PDBsum" id="7DH3"/>
<dbReference type="PDBsum" id="7DH9"/>
<dbReference type="PDBsum" id="7DHC"/>
<dbReference type="PDBsum" id="7DHH"/>
<dbReference type="PDBsum" id="7DHK"/>
<dbReference type="PDBsum" id="7DHN"/>
<dbReference type="PDBsum" id="7DHO"/>
<dbReference type="PDBsum" id="7DHV"/>
<dbReference type="PDBsum" id="7DJO"/>
<dbReference type="PDBsum" id="7DL6"/>
<dbReference type="PDBsum" id="8HLT"/>
<dbReference type="SMR" id="Q92630"/>
<dbReference type="BioGRID" id="114023">
    <property type="interactions" value="170"/>
</dbReference>
<dbReference type="CORUM" id="Q92630"/>
<dbReference type="FunCoup" id="Q92630">
    <property type="interactions" value="2020"/>
</dbReference>
<dbReference type="IntAct" id="Q92630">
    <property type="interactions" value="244"/>
</dbReference>
<dbReference type="MINT" id="Q92630"/>
<dbReference type="STRING" id="9606.ENSP00000342105"/>
<dbReference type="BindingDB" id="Q92630"/>
<dbReference type="ChEMBL" id="CHEMBL4376"/>
<dbReference type="DrugBank" id="DB04719">
    <property type="generic name" value="DIMETHYL-(4,5,6,7-TETRABROMO-1H-BENZOIMIDAZOL-2-YL)-AMINE"/>
</dbReference>
<dbReference type="DrugBank" id="DB07919">
    <property type="generic name" value="Harmine"/>
</dbReference>
<dbReference type="DrugCentral" id="Q92630"/>
<dbReference type="GuidetoPHARMACOLOGY" id="2011"/>
<dbReference type="GlyGen" id="Q92630">
    <property type="glycosylation" value="1 site, 1 O-linked glycan (1 site)"/>
</dbReference>
<dbReference type="iPTMnet" id="Q92630"/>
<dbReference type="PhosphoSitePlus" id="Q92630"/>
<dbReference type="BioMuta" id="DYRK2"/>
<dbReference type="DMDM" id="148887370"/>
<dbReference type="CPTAC" id="non-CPTAC-5645"/>
<dbReference type="CPTAC" id="non-CPTAC-5646"/>
<dbReference type="jPOST" id="Q92630"/>
<dbReference type="MassIVE" id="Q92630"/>
<dbReference type="PaxDb" id="9606-ENSP00000342105"/>
<dbReference type="PeptideAtlas" id="Q92630"/>
<dbReference type="ProteomicsDB" id="75387">
    <molecule id="Q92630-1"/>
</dbReference>
<dbReference type="ProteomicsDB" id="75388">
    <molecule id="Q92630-2"/>
</dbReference>
<dbReference type="Antibodypedia" id="16684">
    <property type="antibodies" value="343 antibodies from 37 providers"/>
</dbReference>
<dbReference type="DNASU" id="8445"/>
<dbReference type="Ensembl" id="ENST00000344096.4">
    <molecule id="Q92630-1"/>
    <property type="protein sequence ID" value="ENSP00000342105.4"/>
    <property type="gene ID" value="ENSG00000127334.11"/>
</dbReference>
<dbReference type="Ensembl" id="ENST00000393555.3">
    <molecule id="Q92630-2"/>
    <property type="protein sequence ID" value="ENSP00000377186.3"/>
    <property type="gene ID" value="ENSG00000127334.11"/>
</dbReference>
<dbReference type="GeneID" id="8445"/>
<dbReference type="KEGG" id="hsa:8445"/>
<dbReference type="MANE-Select" id="ENST00000344096.4">
    <property type="protein sequence ID" value="ENSP00000342105.4"/>
    <property type="RefSeq nucleotide sequence ID" value="NM_006482.3"/>
    <property type="RefSeq protein sequence ID" value="NP_006473.2"/>
</dbReference>
<dbReference type="UCSC" id="uc001str.5">
    <molecule id="Q92630-1"/>
    <property type="organism name" value="human"/>
</dbReference>
<dbReference type="AGR" id="HGNC:3093"/>
<dbReference type="CTD" id="8445"/>
<dbReference type="DisGeNET" id="8445"/>
<dbReference type="GeneCards" id="DYRK2"/>
<dbReference type="HGNC" id="HGNC:3093">
    <property type="gene designation" value="DYRK2"/>
</dbReference>
<dbReference type="HPA" id="ENSG00000127334">
    <property type="expression patterns" value="Low tissue specificity"/>
</dbReference>
<dbReference type="MIM" id="603496">
    <property type="type" value="gene"/>
</dbReference>
<dbReference type="neXtProt" id="NX_Q92630"/>
<dbReference type="OpenTargets" id="ENSG00000127334"/>
<dbReference type="PharmGKB" id="PA27550"/>
<dbReference type="VEuPathDB" id="HostDB:ENSG00000127334"/>
<dbReference type="eggNOG" id="KOG0667">
    <property type="taxonomic scope" value="Eukaryota"/>
</dbReference>
<dbReference type="GeneTree" id="ENSGT00940000158113"/>
<dbReference type="HOGENOM" id="CLU_000288_5_13_1"/>
<dbReference type="InParanoid" id="Q92630"/>
<dbReference type="OMA" id="HTVGGNK"/>
<dbReference type="OrthoDB" id="9332038at2759"/>
<dbReference type="PAN-GO" id="Q92630">
    <property type="GO annotations" value="6 GO annotations based on evolutionary models"/>
</dbReference>
<dbReference type="PhylomeDB" id="Q92630"/>
<dbReference type="TreeFam" id="TF314624"/>
<dbReference type="BRENDA" id="2.7.12.1">
    <property type="organism ID" value="2681"/>
</dbReference>
<dbReference type="PathwayCommons" id="Q92630"/>
<dbReference type="Reactome" id="R-HSA-6804756">
    <property type="pathway name" value="Regulation of TP53 Activity through Phosphorylation"/>
</dbReference>
<dbReference type="SignaLink" id="Q92630"/>
<dbReference type="SIGNOR" id="Q92630"/>
<dbReference type="BioGRID-ORCS" id="8445">
    <property type="hits" value="16 hits in 1188 CRISPR screens"/>
</dbReference>
<dbReference type="CD-CODE" id="DEE660B4">
    <property type="entry name" value="Stress granule"/>
</dbReference>
<dbReference type="ChiTaRS" id="DYRK2">
    <property type="organism name" value="human"/>
</dbReference>
<dbReference type="EvolutionaryTrace" id="Q92630"/>
<dbReference type="GeneWiki" id="DYRK2"/>
<dbReference type="GenomeRNAi" id="8445"/>
<dbReference type="Pharos" id="Q92630">
    <property type="development level" value="Tchem"/>
</dbReference>
<dbReference type="PRO" id="PR:Q92630"/>
<dbReference type="Proteomes" id="UP000005640">
    <property type="component" value="Chromosome 12"/>
</dbReference>
<dbReference type="RNAct" id="Q92630">
    <property type="molecule type" value="protein"/>
</dbReference>
<dbReference type="Bgee" id="ENSG00000127334">
    <property type="expression patterns" value="Expressed in jejunal mucosa and 205 other cell types or tissues"/>
</dbReference>
<dbReference type="ExpressionAtlas" id="Q92630">
    <property type="expression patterns" value="baseline and differential"/>
</dbReference>
<dbReference type="GO" id="GO:0005737">
    <property type="term" value="C:cytoplasm"/>
    <property type="evidence" value="ECO:0000314"/>
    <property type="project" value="UniProtKB"/>
</dbReference>
<dbReference type="GO" id="GO:0005856">
    <property type="term" value="C:cytoskeleton"/>
    <property type="evidence" value="ECO:0000318"/>
    <property type="project" value="GO_Central"/>
</dbReference>
<dbReference type="GO" id="GO:0005829">
    <property type="term" value="C:cytosol"/>
    <property type="evidence" value="ECO:0000314"/>
    <property type="project" value="HPA"/>
</dbReference>
<dbReference type="GO" id="GO:0005654">
    <property type="term" value="C:nucleoplasm"/>
    <property type="evidence" value="ECO:0000314"/>
    <property type="project" value="HPA"/>
</dbReference>
<dbReference type="GO" id="GO:0005634">
    <property type="term" value="C:nucleus"/>
    <property type="evidence" value="ECO:0000314"/>
    <property type="project" value="UniProtKB"/>
</dbReference>
<dbReference type="GO" id="GO:1990904">
    <property type="term" value="C:ribonucleoprotein complex"/>
    <property type="evidence" value="ECO:0007669"/>
    <property type="project" value="Ensembl"/>
</dbReference>
<dbReference type="GO" id="GO:0000151">
    <property type="term" value="C:ubiquitin ligase complex"/>
    <property type="evidence" value="ECO:0000314"/>
    <property type="project" value="UniProtKB"/>
</dbReference>
<dbReference type="GO" id="GO:0005524">
    <property type="term" value="F:ATP binding"/>
    <property type="evidence" value="ECO:0000314"/>
    <property type="project" value="UniProtKB"/>
</dbReference>
<dbReference type="GO" id="GO:0000287">
    <property type="term" value="F:magnesium ion binding"/>
    <property type="evidence" value="ECO:0000314"/>
    <property type="project" value="UniProtKB"/>
</dbReference>
<dbReference type="GO" id="GO:0030145">
    <property type="term" value="F:manganese ion binding"/>
    <property type="evidence" value="ECO:0000314"/>
    <property type="project" value="UniProtKB"/>
</dbReference>
<dbReference type="GO" id="GO:0106310">
    <property type="term" value="F:protein serine kinase activity"/>
    <property type="evidence" value="ECO:0007669"/>
    <property type="project" value="RHEA"/>
</dbReference>
<dbReference type="GO" id="GO:0004674">
    <property type="term" value="F:protein serine/threonine kinase activity"/>
    <property type="evidence" value="ECO:0000314"/>
    <property type="project" value="UniProtKB"/>
</dbReference>
<dbReference type="GO" id="GO:0004712">
    <property type="term" value="F:protein serine/threonine/tyrosine kinase activity"/>
    <property type="evidence" value="ECO:0007669"/>
    <property type="project" value="UniProtKB-EC"/>
</dbReference>
<dbReference type="GO" id="GO:0004713">
    <property type="term" value="F:protein tyrosine kinase activity"/>
    <property type="evidence" value="ECO:0000314"/>
    <property type="project" value="UniProtKB"/>
</dbReference>
<dbReference type="GO" id="GO:0006974">
    <property type="term" value="P:DNA damage response"/>
    <property type="evidence" value="ECO:0000270"/>
    <property type="project" value="UniProtKB"/>
</dbReference>
<dbReference type="GO" id="GO:0042771">
    <property type="term" value="P:intrinsic apoptotic signaling pathway in response to DNA damage by p53 class mediator"/>
    <property type="evidence" value="ECO:0000314"/>
    <property type="project" value="UniProtKB"/>
</dbReference>
<dbReference type="GO" id="GO:0070885">
    <property type="term" value="P:negative regulation of calcineurin-NFAT signaling cascade"/>
    <property type="evidence" value="ECO:0000315"/>
    <property type="project" value="UniProtKB"/>
</dbReference>
<dbReference type="GO" id="GO:0045725">
    <property type="term" value="P:positive regulation of glycogen biosynthetic process"/>
    <property type="evidence" value="ECO:0000314"/>
    <property type="project" value="UniProtKB"/>
</dbReference>
<dbReference type="GO" id="GO:0006468">
    <property type="term" value="P:protein phosphorylation"/>
    <property type="evidence" value="ECO:0000314"/>
    <property type="project" value="UniProtKB"/>
</dbReference>
<dbReference type="GO" id="GO:1901796">
    <property type="term" value="P:regulation of signal transduction by p53 class mediator"/>
    <property type="evidence" value="ECO:0000304"/>
    <property type="project" value="Reactome"/>
</dbReference>
<dbReference type="GO" id="GO:0007224">
    <property type="term" value="P:smoothened signaling pathway"/>
    <property type="evidence" value="ECO:0000315"/>
    <property type="project" value="UniProtKB"/>
</dbReference>
<dbReference type="CDD" id="cd14224">
    <property type="entry name" value="PKc_DYRK2_3"/>
    <property type="match status" value="1"/>
</dbReference>
<dbReference type="FunFam" id="3.30.10.30:FF:000001">
    <property type="entry name" value="Dual specificity tyrosine-phosphorylation-regulated kinase 2"/>
    <property type="match status" value="1"/>
</dbReference>
<dbReference type="FunFam" id="1.10.510.10:FF:000112">
    <property type="entry name" value="Putative dual specificity tyrosine-phosphorylation-regulated kinase 2"/>
    <property type="match status" value="1"/>
</dbReference>
<dbReference type="FunFam" id="3.30.200.20:FF:000127">
    <property type="entry name" value="Putative dual specificity tyrosine-phosphorylation-regulated kinase 2"/>
    <property type="match status" value="1"/>
</dbReference>
<dbReference type="Gene3D" id="3.30.10.30">
    <property type="entry name" value="DYRK"/>
    <property type="match status" value="1"/>
</dbReference>
<dbReference type="Gene3D" id="3.30.200.20">
    <property type="entry name" value="Phosphorylase Kinase, domain 1"/>
    <property type="match status" value="1"/>
</dbReference>
<dbReference type="Gene3D" id="1.10.510.10">
    <property type="entry name" value="Transferase(Phosphotransferase) domain 1"/>
    <property type="match status" value="1"/>
</dbReference>
<dbReference type="InterPro" id="IPR042521">
    <property type="entry name" value="DYRK"/>
</dbReference>
<dbReference type="InterPro" id="IPR011009">
    <property type="entry name" value="Kinase-like_dom_sf"/>
</dbReference>
<dbReference type="InterPro" id="IPR000719">
    <property type="entry name" value="Prot_kinase_dom"/>
</dbReference>
<dbReference type="InterPro" id="IPR017441">
    <property type="entry name" value="Protein_kinase_ATP_BS"/>
</dbReference>
<dbReference type="InterPro" id="IPR008271">
    <property type="entry name" value="Ser/Thr_kinase_AS"/>
</dbReference>
<dbReference type="InterPro" id="IPR050494">
    <property type="entry name" value="Ser_Thr_dual-spec_kinase"/>
</dbReference>
<dbReference type="PANTHER" id="PTHR24058">
    <property type="entry name" value="DUAL SPECIFICITY PROTEIN KINASE"/>
    <property type="match status" value="1"/>
</dbReference>
<dbReference type="PANTHER" id="PTHR24058:SF51">
    <property type="entry name" value="DUAL SPECIFICITY TYROSINE-PHOSPHORYLATION-REGULATED KINASE 2"/>
    <property type="match status" value="1"/>
</dbReference>
<dbReference type="Pfam" id="PF00069">
    <property type="entry name" value="Pkinase"/>
    <property type="match status" value="1"/>
</dbReference>
<dbReference type="SMART" id="SM00220">
    <property type="entry name" value="S_TKc"/>
    <property type="match status" value="1"/>
</dbReference>
<dbReference type="SUPFAM" id="SSF56112">
    <property type="entry name" value="Protein kinase-like (PK-like)"/>
    <property type="match status" value="1"/>
</dbReference>
<dbReference type="PROSITE" id="PS00107">
    <property type="entry name" value="PROTEIN_KINASE_ATP"/>
    <property type="match status" value="1"/>
</dbReference>
<dbReference type="PROSITE" id="PS50011">
    <property type="entry name" value="PROTEIN_KINASE_DOM"/>
    <property type="match status" value="1"/>
</dbReference>
<dbReference type="PROSITE" id="PS00108">
    <property type="entry name" value="PROTEIN_KINASE_ST"/>
    <property type="match status" value="1"/>
</dbReference>